<dbReference type="EMBL" id="AL513382">
    <property type="protein sequence ID" value="CAD02116.1"/>
    <property type="molecule type" value="Genomic_DNA"/>
</dbReference>
<dbReference type="EMBL" id="AE014613">
    <property type="protein sequence ID" value="AAO68777.1"/>
    <property type="molecule type" value="Genomic_DNA"/>
</dbReference>
<dbReference type="RefSeq" id="NP_456272.1">
    <property type="nucleotide sequence ID" value="NC_003198.1"/>
</dbReference>
<dbReference type="SMR" id="P0A1E0"/>
<dbReference type="STRING" id="220341.gene:17585810"/>
<dbReference type="KEGG" id="stt:t1115"/>
<dbReference type="KEGG" id="sty:STY1881"/>
<dbReference type="PATRIC" id="fig|220341.7.peg.1896"/>
<dbReference type="eggNOG" id="COG1278">
    <property type="taxonomic scope" value="Bacteria"/>
</dbReference>
<dbReference type="HOGENOM" id="CLU_117621_2_1_6"/>
<dbReference type="OMA" id="SHKMTGI"/>
<dbReference type="OrthoDB" id="6590265at2"/>
<dbReference type="Proteomes" id="UP000000541">
    <property type="component" value="Chromosome"/>
</dbReference>
<dbReference type="Proteomes" id="UP000002670">
    <property type="component" value="Chromosome"/>
</dbReference>
<dbReference type="GO" id="GO:0005829">
    <property type="term" value="C:cytosol"/>
    <property type="evidence" value="ECO:0007669"/>
    <property type="project" value="UniProtKB-ARBA"/>
</dbReference>
<dbReference type="GO" id="GO:0003677">
    <property type="term" value="F:DNA binding"/>
    <property type="evidence" value="ECO:0007669"/>
    <property type="project" value="UniProtKB-KW"/>
</dbReference>
<dbReference type="Gene3D" id="2.40.50.140">
    <property type="entry name" value="Nucleic acid-binding proteins"/>
    <property type="match status" value="1"/>
</dbReference>
<dbReference type="InterPro" id="IPR012156">
    <property type="entry name" value="Cold_shock_CspA"/>
</dbReference>
<dbReference type="InterPro" id="IPR050181">
    <property type="entry name" value="Cold_shock_domain"/>
</dbReference>
<dbReference type="InterPro" id="IPR011129">
    <property type="entry name" value="CSD"/>
</dbReference>
<dbReference type="InterPro" id="IPR019844">
    <property type="entry name" value="CSD_CS"/>
</dbReference>
<dbReference type="InterPro" id="IPR002059">
    <property type="entry name" value="CSP_DNA-bd"/>
</dbReference>
<dbReference type="InterPro" id="IPR012340">
    <property type="entry name" value="NA-bd_OB-fold"/>
</dbReference>
<dbReference type="NCBIfam" id="NF012007">
    <property type="entry name" value="PRK15463.1"/>
    <property type="match status" value="1"/>
</dbReference>
<dbReference type="PANTHER" id="PTHR11544">
    <property type="entry name" value="COLD SHOCK DOMAIN CONTAINING PROTEINS"/>
    <property type="match status" value="1"/>
</dbReference>
<dbReference type="Pfam" id="PF00313">
    <property type="entry name" value="CSD"/>
    <property type="match status" value="1"/>
</dbReference>
<dbReference type="PIRSF" id="PIRSF002599">
    <property type="entry name" value="Cold_shock_A"/>
    <property type="match status" value="1"/>
</dbReference>
<dbReference type="PRINTS" id="PR00050">
    <property type="entry name" value="COLDSHOCK"/>
</dbReference>
<dbReference type="SMART" id="SM00357">
    <property type="entry name" value="CSP"/>
    <property type="match status" value="1"/>
</dbReference>
<dbReference type="SUPFAM" id="SSF50249">
    <property type="entry name" value="Nucleic acid-binding proteins"/>
    <property type="match status" value="1"/>
</dbReference>
<dbReference type="PROSITE" id="PS00352">
    <property type="entry name" value="CSD_1"/>
    <property type="match status" value="1"/>
</dbReference>
<dbReference type="PROSITE" id="PS51857">
    <property type="entry name" value="CSD_2"/>
    <property type="match status" value="1"/>
</dbReference>
<evidence type="ECO:0000250" key="1"/>
<feature type="chain" id="PRO_0000100270" description="Cold shock-like protein CspH">
    <location>
        <begin position="1"/>
        <end position="70"/>
    </location>
</feature>
<feature type="domain" description="CSD">
    <location>
        <begin position="7"/>
        <end position="67"/>
    </location>
</feature>
<sequence>MSRKMTGIVKTFDCKSGKGLITPSDGRKDVQVHISACRQHETEALIPGIRVEFCRINGLRGPTAANVYLS</sequence>
<proteinExistence type="inferred from homology"/>
<reference key="1">
    <citation type="journal article" date="2001" name="Nature">
        <title>Complete genome sequence of a multiple drug resistant Salmonella enterica serovar Typhi CT18.</title>
        <authorList>
            <person name="Parkhill J."/>
            <person name="Dougan G."/>
            <person name="James K.D."/>
            <person name="Thomson N.R."/>
            <person name="Pickard D."/>
            <person name="Wain J."/>
            <person name="Churcher C.M."/>
            <person name="Mungall K.L."/>
            <person name="Bentley S.D."/>
            <person name="Holden M.T.G."/>
            <person name="Sebaihia M."/>
            <person name="Baker S."/>
            <person name="Basham D."/>
            <person name="Brooks K."/>
            <person name="Chillingworth T."/>
            <person name="Connerton P."/>
            <person name="Cronin A."/>
            <person name="Davis P."/>
            <person name="Davies R.M."/>
            <person name="Dowd L."/>
            <person name="White N."/>
            <person name="Farrar J."/>
            <person name="Feltwell T."/>
            <person name="Hamlin N."/>
            <person name="Haque A."/>
            <person name="Hien T.T."/>
            <person name="Holroyd S."/>
            <person name="Jagels K."/>
            <person name="Krogh A."/>
            <person name="Larsen T.S."/>
            <person name="Leather S."/>
            <person name="Moule S."/>
            <person name="O'Gaora P."/>
            <person name="Parry C."/>
            <person name="Quail M.A."/>
            <person name="Rutherford K.M."/>
            <person name="Simmonds M."/>
            <person name="Skelton J."/>
            <person name="Stevens K."/>
            <person name="Whitehead S."/>
            <person name="Barrell B.G."/>
        </authorList>
    </citation>
    <scope>NUCLEOTIDE SEQUENCE [LARGE SCALE GENOMIC DNA]</scope>
    <source>
        <strain>CT18</strain>
    </source>
</reference>
<reference key="2">
    <citation type="journal article" date="2003" name="J. Bacteriol.">
        <title>Comparative genomics of Salmonella enterica serovar Typhi strains Ty2 and CT18.</title>
        <authorList>
            <person name="Deng W."/>
            <person name="Liou S.-R."/>
            <person name="Plunkett G. III"/>
            <person name="Mayhew G.F."/>
            <person name="Rose D.J."/>
            <person name="Burland V."/>
            <person name="Kodoyianni V."/>
            <person name="Schwartz D.C."/>
            <person name="Blattner F.R."/>
        </authorList>
    </citation>
    <scope>NUCLEOTIDE SEQUENCE [LARGE SCALE GENOMIC DNA]</scope>
    <source>
        <strain>ATCC 700931 / Ty2</strain>
    </source>
</reference>
<comment type="subcellular location">
    <subcellularLocation>
        <location evidence="1">Cytoplasm</location>
    </subcellularLocation>
</comment>
<name>CSPH_SALTI</name>
<gene>
    <name type="primary">cspH</name>
    <name type="ordered locus">STY1881</name>
    <name type="ordered locus">t1115</name>
</gene>
<protein>
    <recommendedName>
        <fullName>Cold shock-like protein CspH</fullName>
    </recommendedName>
</protein>
<organism>
    <name type="scientific">Salmonella typhi</name>
    <dbReference type="NCBI Taxonomy" id="90370"/>
    <lineage>
        <taxon>Bacteria</taxon>
        <taxon>Pseudomonadati</taxon>
        <taxon>Pseudomonadota</taxon>
        <taxon>Gammaproteobacteria</taxon>
        <taxon>Enterobacterales</taxon>
        <taxon>Enterobacteriaceae</taxon>
        <taxon>Salmonella</taxon>
    </lineage>
</organism>
<keyword id="KW-0010">Activator</keyword>
<keyword id="KW-0963">Cytoplasm</keyword>
<keyword id="KW-0238">DNA-binding</keyword>
<keyword id="KW-0804">Transcription</keyword>
<keyword id="KW-0805">Transcription regulation</keyword>
<accession>P0A1E0</accession>
<accession>O33793</accession>